<name>PUR5_AZOSB</name>
<dbReference type="EC" id="6.3.3.1" evidence="1"/>
<dbReference type="EMBL" id="AM406670">
    <property type="protein sequence ID" value="CAL95753.1"/>
    <property type="molecule type" value="Genomic_DNA"/>
</dbReference>
<dbReference type="RefSeq" id="WP_011766861.1">
    <property type="nucleotide sequence ID" value="NC_008702.1"/>
</dbReference>
<dbReference type="SMR" id="A1KA97"/>
<dbReference type="STRING" id="62928.azo3136"/>
<dbReference type="KEGG" id="azo:azo3136"/>
<dbReference type="eggNOG" id="COG0150">
    <property type="taxonomic scope" value="Bacteria"/>
</dbReference>
<dbReference type="HOGENOM" id="CLU_047116_0_0_4"/>
<dbReference type="UniPathway" id="UPA00074">
    <property type="reaction ID" value="UER00129"/>
</dbReference>
<dbReference type="Proteomes" id="UP000002588">
    <property type="component" value="Chromosome"/>
</dbReference>
<dbReference type="GO" id="GO:0005829">
    <property type="term" value="C:cytosol"/>
    <property type="evidence" value="ECO:0007669"/>
    <property type="project" value="TreeGrafter"/>
</dbReference>
<dbReference type="GO" id="GO:0005524">
    <property type="term" value="F:ATP binding"/>
    <property type="evidence" value="ECO:0007669"/>
    <property type="project" value="UniProtKB-KW"/>
</dbReference>
<dbReference type="GO" id="GO:0004637">
    <property type="term" value="F:phosphoribosylamine-glycine ligase activity"/>
    <property type="evidence" value="ECO:0007669"/>
    <property type="project" value="TreeGrafter"/>
</dbReference>
<dbReference type="GO" id="GO:0004641">
    <property type="term" value="F:phosphoribosylformylglycinamidine cyclo-ligase activity"/>
    <property type="evidence" value="ECO:0007669"/>
    <property type="project" value="UniProtKB-UniRule"/>
</dbReference>
<dbReference type="GO" id="GO:0006189">
    <property type="term" value="P:'de novo' IMP biosynthetic process"/>
    <property type="evidence" value="ECO:0007669"/>
    <property type="project" value="UniProtKB-UniRule"/>
</dbReference>
<dbReference type="GO" id="GO:0046084">
    <property type="term" value="P:adenine biosynthetic process"/>
    <property type="evidence" value="ECO:0007669"/>
    <property type="project" value="TreeGrafter"/>
</dbReference>
<dbReference type="CDD" id="cd02196">
    <property type="entry name" value="PurM"/>
    <property type="match status" value="1"/>
</dbReference>
<dbReference type="FunFam" id="3.30.1330.10:FF:000001">
    <property type="entry name" value="Phosphoribosylformylglycinamidine cyclo-ligase"/>
    <property type="match status" value="1"/>
</dbReference>
<dbReference type="FunFam" id="3.90.650.10:FF:000001">
    <property type="entry name" value="Phosphoribosylformylglycinamidine cyclo-ligase"/>
    <property type="match status" value="1"/>
</dbReference>
<dbReference type="Gene3D" id="3.90.650.10">
    <property type="entry name" value="PurM-like C-terminal domain"/>
    <property type="match status" value="1"/>
</dbReference>
<dbReference type="Gene3D" id="3.30.1330.10">
    <property type="entry name" value="PurM-like, N-terminal domain"/>
    <property type="match status" value="1"/>
</dbReference>
<dbReference type="HAMAP" id="MF_00741">
    <property type="entry name" value="AIRS"/>
    <property type="match status" value="1"/>
</dbReference>
<dbReference type="InterPro" id="IPR010918">
    <property type="entry name" value="PurM-like_C_dom"/>
</dbReference>
<dbReference type="InterPro" id="IPR036676">
    <property type="entry name" value="PurM-like_C_sf"/>
</dbReference>
<dbReference type="InterPro" id="IPR016188">
    <property type="entry name" value="PurM-like_N"/>
</dbReference>
<dbReference type="InterPro" id="IPR036921">
    <property type="entry name" value="PurM-like_N_sf"/>
</dbReference>
<dbReference type="InterPro" id="IPR004733">
    <property type="entry name" value="PurM_cligase"/>
</dbReference>
<dbReference type="NCBIfam" id="TIGR00878">
    <property type="entry name" value="purM"/>
    <property type="match status" value="1"/>
</dbReference>
<dbReference type="PANTHER" id="PTHR10520:SF12">
    <property type="entry name" value="TRIFUNCTIONAL PURINE BIOSYNTHETIC PROTEIN ADENOSINE-3"/>
    <property type="match status" value="1"/>
</dbReference>
<dbReference type="PANTHER" id="PTHR10520">
    <property type="entry name" value="TRIFUNCTIONAL PURINE BIOSYNTHETIC PROTEIN ADENOSINE-3-RELATED"/>
    <property type="match status" value="1"/>
</dbReference>
<dbReference type="Pfam" id="PF00586">
    <property type="entry name" value="AIRS"/>
    <property type="match status" value="1"/>
</dbReference>
<dbReference type="Pfam" id="PF02769">
    <property type="entry name" value="AIRS_C"/>
    <property type="match status" value="1"/>
</dbReference>
<dbReference type="SUPFAM" id="SSF56042">
    <property type="entry name" value="PurM C-terminal domain-like"/>
    <property type="match status" value="1"/>
</dbReference>
<dbReference type="SUPFAM" id="SSF55326">
    <property type="entry name" value="PurM N-terminal domain-like"/>
    <property type="match status" value="1"/>
</dbReference>
<protein>
    <recommendedName>
        <fullName evidence="1">Phosphoribosylformylglycinamidine cyclo-ligase</fullName>
        <ecNumber evidence="1">6.3.3.1</ecNumber>
    </recommendedName>
    <alternativeName>
        <fullName evidence="1">AIR synthase</fullName>
    </alternativeName>
    <alternativeName>
        <fullName evidence="1">AIRS</fullName>
    </alternativeName>
    <alternativeName>
        <fullName evidence="1">Phosphoribosyl-aminoimidazole synthetase</fullName>
    </alternativeName>
</protein>
<feature type="chain" id="PRO_1000192991" description="Phosphoribosylformylglycinamidine cyclo-ligase">
    <location>
        <begin position="1"/>
        <end position="352"/>
    </location>
</feature>
<evidence type="ECO:0000255" key="1">
    <source>
        <dbReference type="HAMAP-Rule" id="MF_00741"/>
    </source>
</evidence>
<reference key="1">
    <citation type="journal article" date="2006" name="Nat. Biotechnol.">
        <title>Complete genome of the mutualistic, N2-fixing grass endophyte Azoarcus sp. strain BH72.</title>
        <authorList>
            <person name="Krause A."/>
            <person name="Ramakumar A."/>
            <person name="Bartels D."/>
            <person name="Battistoni F."/>
            <person name="Bekel T."/>
            <person name="Boch J."/>
            <person name="Boehm M."/>
            <person name="Friedrich F."/>
            <person name="Hurek T."/>
            <person name="Krause L."/>
            <person name="Linke B."/>
            <person name="McHardy A.C."/>
            <person name="Sarkar A."/>
            <person name="Schneiker S."/>
            <person name="Syed A.A."/>
            <person name="Thauer R."/>
            <person name="Vorhoelter F.-J."/>
            <person name="Weidner S."/>
            <person name="Puehler A."/>
            <person name="Reinhold-Hurek B."/>
            <person name="Kaiser O."/>
            <person name="Goesmann A."/>
        </authorList>
    </citation>
    <scope>NUCLEOTIDE SEQUENCE [LARGE SCALE GENOMIC DNA]</scope>
    <source>
        <strain>BH72</strain>
    </source>
</reference>
<keyword id="KW-0067">ATP-binding</keyword>
<keyword id="KW-0963">Cytoplasm</keyword>
<keyword id="KW-0436">Ligase</keyword>
<keyword id="KW-0547">Nucleotide-binding</keyword>
<keyword id="KW-0658">Purine biosynthesis</keyword>
<keyword id="KW-1185">Reference proteome</keyword>
<sequence length="352" mass="37206">MSVSNSASPSSLSYRDAGVDIEAGDALVDRIKPFAKRTMRPEVLGGIGGFGALFELSKKFKEPVLVSGTDGVGTKLKLAFQLNKHDTVGQDLVAMSVNDILVQGAEPLFFLDYFACGKLDVDTAADVVKGIAHGCELAGCALIGGETAEMPSMYPEGEYDLAGFAVGAVEKADIIDGSKIVPGDVVLGLASSGAHSNGYSLVRKIIEVAKPDLDADFHGRTFRDVVMEPTRIYVKPLLALMQAMPGVVKGMAHITGGGITENVPRILRDELTARIDAASWTLPPLFQWLQQAGNVDTQEMYRVFNCGIGMAVVVAADVADAVAAQLTAAGETVYRIGRIDSRKDGEAQTIVA</sequence>
<comment type="catalytic activity">
    <reaction evidence="1">
        <text>2-formamido-N(1)-(5-O-phospho-beta-D-ribosyl)acetamidine + ATP = 5-amino-1-(5-phospho-beta-D-ribosyl)imidazole + ADP + phosphate + H(+)</text>
        <dbReference type="Rhea" id="RHEA:23032"/>
        <dbReference type="ChEBI" id="CHEBI:15378"/>
        <dbReference type="ChEBI" id="CHEBI:30616"/>
        <dbReference type="ChEBI" id="CHEBI:43474"/>
        <dbReference type="ChEBI" id="CHEBI:137981"/>
        <dbReference type="ChEBI" id="CHEBI:147287"/>
        <dbReference type="ChEBI" id="CHEBI:456216"/>
        <dbReference type="EC" id="6.3.3.1"/>
    </reaction>
</comment>
<comment type="pathway">
    <text evidence="1">Purine metabolism; IMP biosynthesis via de novo pathway; 5-amino-1-(5-phospho-D-ribosyl)imidazole from N(2)-formyl-N(1)-(5-phospho-D-ribosyl)glycinamide: step 2/2.</text>
</comment>
<comment type="subcellular location">
    <subcellularLocation>
        <location evidence="1">Cytoplasm</location>
    </subcellularLocation>
</comment>
<comment type="similarity">
    <text evidence="1">Belongs to the AIR synthase family.</text>
</comment>
<gene>
    <name evidence="1" type="primary">purM</name>
    <name type="ordered locus">azo3136</name>
</gene>
<accession>A1KA97</accession>
<proteinExistence type="inferred from homology"/>
<organism>
    <name type="scientific">Azoarcus sp. (strain BH72)</name>
    <dbReference type="NCBI Taxonomy" id="418699"/>
    <lineage>
        <taxon>Bacteria</taxon>
        <taxon>Pseudomonadati</taxon>
        <taxon>Pseudomonadota</taxon>
        <taxon>Betaproteobacteria</taxon>
        <taxon>Rhodocyclales</taxon>
        <taxon>Zoogloeaceae</taxon>
        <taxon>Azoarcus</taxon>
    </lineage>
</organism>